<accession>Q9JUK6</accession>
<accession>A1IRR3</accession>
<evidence type="ECO:0000255" key="1">
    <source>
        <dbReference type="HAMAP-Rule" id="MF_01025"/>
    </source>
</evidence>
<reference key="1">
    <citation type="journal article" date="2000" name="Nature">
        <title>Complete DNA sequence of a serogroup A strain of Neisseria meningitidis Z2491.</title>
        <authorList>
            <person name="Parkhill J."/>
            <person name="Achtman M."/>
            <person name="James K.D."/>
            <person name="Bentley S.D."/>
            <person name="Churcher C.M."/>
            <person name="Klee S.R."/>
            <person name="Morelli G."/>
            <person name="Basham D."/>
            <person name="Brown D."/>
            <person name="Chillingworth T."/>
            <person name="Davies R.M."/>
            <person name="Davis P."/>
            <person name="Devlin K."/>
            <person name="Feltwell T."/>
            <person name="Hamlin N."/>
            <person name="Holroyd S."/>
            <person name="Jagels K."/>
            <person name="Leather S."/>
            <person name="Moule S."/>
            <person name="Mungall K.L."/>
            <person name="Quail M.A."/>
            <person name="Rajandream M.A."/>
            <person name="Rutherford K.M."/>
            <person name="Simmonds M."/>
            <person name="Skelton J."/>
            <person name="Whitehead S."/>
            <person name="Spratt B.G."/>
            <person name="Barrell B.G."/>
        </authorList>
    </citation>
    <scope>NUCLEOTIDE SEQUENCE [LARGE SCALE GENOMIC DNA]</scope>
    <source>
        <strain>DSM 15465 / Z2491</strain>
    </source>
</reference>
<keyword id="KW-0028">Amino-acid biosynthesis</keyword>
<keyword id="KW-0100">Branched-chain amino acid biosynthesis</keyword>
<keyword id="KW-0963">Cytoplasm</keyword>
<keyword id="KW-0432">Leucine biosynthesis</keyword>
<keyword id="KW-0464">Manganese</keyword>
<keyword id="KW-0479">Metal-binding</keyword>
<keyword id="KW-0808">Transferase</keyword>
<organism>
    <name type="scientific">Neisseria meningitidis serogroup A / serotype 4A (strain DSM 15465 / Z2491)</name>
    <dbReference type="NCBI Taxonomy" id="122587"/>
    <lineage>
        <taxon>Bacteria</taxon>
        <taxon>Pseudomonadati</taxon>
        <taxon>Pseudomonadota</taxon>
        <taxon>Betaproteobacteria</taxon>
        <taxon>Neisseriales</taxon>
        <taxon>Neisseriaceae</taxon>
        <taxon>Neisseria</taxon>
    </lineage>
</organism>
<feature type="chain" id="PRO_0000140363" description="2-isopropylmalate synthase">
    <location>
        <begin position="1"/>
        <end position="517"/>
    </location>
</feature>
<feature type="domain" description="Pyruvate carboxyltransferase" evidence="1">
    <location>
        <begin position="7"/>
        <end position="269"/>
    </location>
</feature>
<feature type="region of interest" description="Regulatory domain" evidence="1">
    <location>
        <begin position="395"/>
        <end position="517"/>
    </location>
</feature>
<feature type="binding site" evidence="1">
    <location>
        <position position="16"/>
    </location>
    <ligand>
        <name>Mn(2+)</name>
        <dbReference type="ChEBI" id="CHEBI:29035"/>
    </ligand>
</feature>
<feature type="binding site" evidence="1">
    <location>
        <position position="204"/>
    </location>
    <ligand>
        <name>Mn(2+)</name>
        <dbReference type="ChEBI" id="CHEBI:29035"/>
    </ligand>
</feature>
<feature type="binding site" evidence="1">
    <location>
        <position position="206"/>
    </location>
    <ligand>
        <name>Mn(2+)</name>
        <dbReference type="ChEBI" id="CHEBI:29035"/>
    </ligand>
</feature>
<feature type="binding site" evidence="1">
    <location>
        <position position="240"/>
    </location>
    <ligand>
        <name>Mn(2+)</name>
        <dbReference type="ChEBI" id="CHEBI:29035"/>
    </ligand>
</feature>
<name>LEU1_NEIMA</name>
<sequence>MTQANRVIIFDTTLRDGEQSPGAAMTKEEKIRVARQLEKLGVDIIEAGFAAASPGDFEAVNAIAKTITKSTVCSLSRAIERDIRQAGEAVAPAPKKRIHTFIATSPIHMEYKLKMKPKQVIEAAVKAVKIAREYTDDVEFSCEDALRSEIDFLAEICGAVIEAGATTINIPDTVGYSIPYKTEEFFRELIVKTPNGGKVVWSAHCHNDLGLAVANSLAALKGGARQVECTVNGLGERAGNASVEEIVMALKVRHDLFGLETGIDTTQIVPSSKLVSTITGYPVQPNKAIVGANAFSHESGIHQDGVLKHRETYEIMSAESVGWATNRLSLGKLSGRNAFKTKLADLGIELESEEALNAAFARFKELADKKREIFDEDLHALVSDEMGSMNAESYKFISQKISTETGEEPRADIVFSIKGEEKRASATGSGPVDAIFKAIESVAQSGAALQIYSVNAVTQGTESQGETSVRLARGNRVVNGQGADTDVLVATAKAYLSALSKLEFGSAKPKAQGSGTI</sequence>
<gene>
    <name evidence="1" type="primary">leuA</name>
    <name type="ordered locus">NMA1270</name>
</gene>
<dbReference type="EC" id="2.3.3.13" evidence="1"/>
<dbReference type="EMBL" id="AL157959">
    <property type="protein sequence ID" value="CAM08457.1"/>
    <property type="molecule type" value="Genomic_DNA"/>
</dbReference>
<dbReference type="PIR" id="C81895">
    <property type="entry name" value="C81895"/>
</dbReference>
<dbReference type="SMR" id="Q9JUK6"/>
<dbReference type="EnsemblBacteria" id="CAM08457">
    <property type="protein sequence ID" value="CAM08457"/>
    <property type="gene ID" value="NMA1270"/>
</dbReference>
<dbReference type="KEGG" id="nma:NMA1270"/>
<dbReference type="HOGENOM" id="CLU_022158_0_1_4"/>
<dbReference type="UniPathway" id="UPA00048">
    <property type="reaction ID" value="UER00070"/>
</dbReference>
<dbReference type="Proteomes" id="UP000000626">
    <property type="component" value="Chromosome"/>
</dbReference>
<dbReference type="GO" id="GO:0005829">
    <property type="term" value="C:cytosol"/>
    <property type="evidence" value="ECO:0007669"/>
    <property type="project" value="TreeGrafter"/>
</dbReference>
<dbReference type="GO" id="GO:0003852">
    <property type="term" value="F:2-isopropylmalate synthase activity"/>
    <property type="evidence" value="ECO:0007669"/>
    <property type="project" value="UniProtKB-UniRule"/>
</dbReference>
<dbReference type="GO" id="GO:0003985">
    <property type="term" value="F:acetyl-CoA C-acetyltransferase activity"/>
    <property type="evidence" value="ECO:0007669"/>
    <property type="project" value="UniProtKB-UniRule"/>
</dbReference>
<dbReference type="GO" id="GO:0030145">
    <property type="term" value="F:manganese ion binding"/>
    <property type="evidence" value="ECO:0007669"/>
    <property type="project" value="UniProtKB-UniRule"/>
</dbReference>
<dbReference type="GO" id="GO:0009098">
    <property type="term" value="P:L-leucine biosynthetic process"/>
    <property type="evidence" value="ECO:0007669"/>
    <property type="project" value="UniProtKB-UniRule"/>
</dbReference>
<dbReference type="CDD" id="cd07940">
    <property type="entry name" value="DRE_TIM_IPMS"/>
    <property type="match status" value="1"/>
</dbReference>
<dbReference type="FunFam" id="1.10.238.260:FF:000001">
    <property type="entry name" value="2-isopropylmalate synthase"/>
    <property type="match status" value="1"/>
</dbReference>
<dbReference type="FunFam" id="3.20.20.70:FF:000010">
    <property type="entry name" value="2-isopropylmalate synthase"/>
    <property type="match status" value="1"/>
</dbReference>
<dbReference type="FunFam" id="3.30.160.270:FF:000003">
    <property type="entry name" value="2-isopropylmalate synthase"/>
    <property type="match status" value="1"/>
</dbReference>
<dbReference type="Gene3D" id="1.10.238.260">
    <property type="match status" value="1"/>
</dbReference>
<dbReference type="Gene3D" id="3.30.160.270">
    <property type="match status" value="1"/>
</dbReference>
<dbReference type="Gene3D" id="3.20.20.70">
    <property type="entry name" value="Aldolase class I"/>
    <property type="match status" value="1"/>
</dbReference>
<dbReference type="HAMAP" id="MF_01025">
    <property type="entry name" value="LeuA_type1"/>
    <property type="match status" value="1"/>
</dbReference>
<dbReference type="InterPro" id="IPR050073">
    <property type="entry name" value="2-IPM_HCS-like"/>
</dbReference>
<dbReference type="InterPro" id="IPR013709">
    <property type="entry name" value="2-isopropylmalate_synth_dimer"/>
</dbReference>
<dbReference type="InterPro" id="IPR002034">
    <property type="entry name" value="AIPM/Hcit_synth_CS"/>
</dbReference>
<dbReference type="InterPro" id="IPR013785">
    <property type="entry name" value="Aldolase_TIM"/>
</dbReference>
<dbReference type="InterPro" id="IPR054691">
    <property type="entry name" value="LeuA/HCS_post-cat"/>
</dbReference>
<dbReference type="InterPro" id="IPR036230">
    <property type="entry name" value="LeuA_allosteric_dom_sf"/>
</dbReference>
<dbReference type="InterPro" id="IPR005671">
    <property type="entry name" value="LeuA_bact_synth"/>
</dbReference>
<dbReference type="InterPro" id="IPR000891">
    <property type="entry name" value="PYR_CT"/>
</dbReference>
<dbReference type="NCBIfam" id="TIGR00973">
    <property type="entry name" value="leuA_bact"/>
    <property type="match status" value="1"/>
</dbReference>
<dbReference type="NCBIfam" id="NF002086">
    <property type="entry name" value="PRK00915.1-3"/>
    <property type="match status" value="1"/>
</dbReference>
<dbReference type="NCBIfam" id="NF002087">
    <property type="entry name" value="PRK00915.1-4"/>
    <property type="match status" value="1"/>
</dbReference>
<dbReference type="PANTHER" id="PTHR10277:SF9">
    <property type="entry name" value="2-ISOPROPYLMALATE SYNTHASE 1, CHLOROPLASTIC-RELATED"/>
    <property type="match status" value="1"/>
</dbReference>
<dbReference type="PANTHER" id="PTHR10277">
    <property type="entry name" value="HOMOCITRATE SYNTHASE-RELATED"/>
    <property type="match status" value="1"/>
</dbReference>
<dbReference type="Pfam" id="PF22617">
    <property type="entry name" value="HCS_D2"/>
    <property type="match status" value="1"/>
</dbReference>
<dbReference type="Pfam" id="PF00682">
    <property type="entry name" value="HMGL-like"/>
    <property type="match status" value="1"/>
</dbReference>
<dbReference type="Pfam" id="PF08502">
    <property type="entry name" value="LeuA_dimer"/>
    <property type="match status" value="1"/>
</dbReference>
<dbReference type="SMART" id="SM00917">
    <property type="entry name" value="LeuA_dimer"/>
    <property type="match status" value="1"/>
</dbReference>
<dbReference type="SUPFAM" id="SSF110921">
    <property type="entry name" value="2-isopropylmalate synthase LeuA, allosteric (dimerisation) domain"/>
    <property type="match status" value="1"/>
</dbReference>
<dbReference type="SUPFAM" id="SSF51569">
    <property type="entry name" value="Aldolase"/>
    <property type="match status" value="1"/>
</dbReference>
<dbReference type="PROSITE" id="PS00815">
    <property type="entry name" value="AIPM_HOMOCIT_SYNTH_1"/>
    <property type="match status" value="1"/>
</dbReference>
<dbReference type="PROSITE" id="PS00816">
    <property type="entry name" value="AIPM_HOMOCIT_SYNTH_2"/>
    <property type="match status" value="1"/>
</dbReference>
<dbReference type="PROSITE" id="PS50991">
    <property type="entry name" value="PYR_CT"/>
    <property type="match status" value="1"/>
</dbReference>
<comment type="function">
    <text evidence="1">Catalyzes the condensation of the acetyl group of acetyl-CoA with 3-methyl-2-oxobutanoate (2-ketoisovalerate) to form 3-carboxy-3-hydroxy-4-methylpentanoate (2-isopropylmalate).</text>
</comment>
<comment type="catalytic activity">
    <reaction evidence="1">
        <text>3-methyl-2-oxobutanoate + acetyl-CoA + H2O = (2S)-2-isopropylmalate + CoA + H(+)</text>
        <dbReference type="Rhea" id="RHEA:21524"/>
        <dbReference type="ChEBI" id="CHEBI:1178"/>
        <dbReference type="ChEBI" id="CHEBI:11851"/>
        <dbReference type="ChEBI" id="CHEBI:15377"/>
        <dbReference type="ChEBI" id="CHEBI:15378"/>
        <dbReference type="ChEBI" id="CHEBI:57287"/>
        <dbReference type="ChEBI" id="CHEBI:57288"/>
        <dbReference type="EC" id="2.3.3.13"/>
    </reaction>
</comment>
<comment type="cofactor">
    <cofactor evidence="1">
        <name>Mn(2+)</name>
        <dbReference type="ChEBI" id="CHEBI:29035"/>
    </cofactor>
</comment>
<comment type="pathway">
    <text evidence="1">Amino-acid biosynthesis; L-leucine biosynthesis; L-leucine from 3-methyl-2-oxobutanoate: step 1/4.</text>
</comment>
<comment type="subunit">
    <text evidence="1">Homodimer.</text>
</comment>
<comment type="subcellular location">
    <subcellularLocation>
        <location evidence="1">Cytoplasm</location>
    </subcellularLocation>
</comment>
<comment type="similarity">
    <text evidence="1">Belongs to the alpha-IPM synthase/homocitrate synthase family. LeuA type 1 subfamily.</text>
</comment>
<protein>
    <recommendedName>
        <fullName evidence="1">2-isopropylmalate synthase</fullName>
        <ecNumber evidence="1">2.3.3.13</ecNumber>
    </recommendedName>
    <alternativeName>
        <fullName evidence="1">Alpha-IPM synthase</fullName>
    </alternativeName>
    <alternativeName>
        <fullName evidence="1">Alpha-isopropylmalate synthase</fullName>
    </alternativeName>
</protein>
<proteinExistence type="inferred from homology"/>